<dbReference type="EMBL" id="CP000942">
    <property type="protein sequence ID" value="ACA32712.1"/>
    <property type="molecule type" value="Genomic_DNA"/>
</dbReference>
<dbReference type="RefSeq" id="WP_006688889.1">
    <property type="nucleotide sequence ID" value="NC_010503.1"/>
</dbReference>
<dbReference type="SMR" id="B1AIC3"/>
<dbReference type="GeneID" id="29672294"/>
<dbReference type="KEGG" id="upa:UPA3_0140"/>
<dbReference type="HOGENOM" id="CLU_085114_1_1_14"/>
<dbReference type="Proteomes" id="UP000002162">
    <property type="component" value="Chromosome"/>
</dbReference>
<dbReference type="GO" id="GO:0005886">
    <property type="term" value="C:plasma membrane"/>
    <property type="evidence" value="ECO:0007669"/>
    <property type="project" value="UniProtKB-SubCell"/>
</dbReference>
<dbReference type="GO" id="GO:0045259">
    <property type="term" value="C:proton-transporting ATP synthase complex"/>
    <property type="evidence" value="ECO:0007669"/>
    <property type="project" value="UniProtKB-KW"/>
</dbReference>
<dbReference type="GO" id="GO:0046933">
    <property type="term" value="F:proton-transporting ATP synthase activity, rotational mechanism"/>
    <property type="evidence" value="ECO:0007669"/>
    <property type="project" value="UniProtKB-UniRule"/>
</dbReference>
<dbReference type="Gene3D" id="1.10.520.20">
    <property type="entry name" value="N-terminal domain of the delta subunit of the F1F0-ATP synthase"/>
    <property type="match status" value="1"/>
</dbReference>
<dbReference type="HAMAP" id="MF_01416">
    <property type="entry name" value="ATP_synth_delta_bact"/>
    <property type="match status" value="1"/>
</dbReference>
<dbReference type="InterPro" id="IPR026015">
    <property type="entry name" value="ATP_synth_OSCP/delta_N_sf"/>
</dbReference>
<dbReference type="InterPro" id="IPR000711">
    <property type="entry name" value="ATPase_OSCP/dsu"/>
</dbReference>
<dbReference type="NCBIfam" id="TIGR01145">
    <property type="entry name" value="ATP_synt_delta"/>
    <property type="match status" value="1"/>
</dbReference>
<dbReference type="PANTHER" id="PTHR11910">
    <property type="entry name" value="ATP SYNTHASE DELTA CHAIN"/>
    <property type="match status" value="1"/>
</dbReference>
<dbReference type="Pfam" id="PF00213">
    <property type="entry name" value="OSCP"/>
    <property type="match status" value="1"/>
</dbReference>
<dbReference type="PRINTS" id="PR00125">
    <property type="entry name" value="ATPASEDELTA"/>
</dbReference>
<dbReference type="SUPFAM" id="SSF47928">
    <property type="entry name" value="N-terminal domain of the delta subunit of the F1F0-ATP synthase"/>
    <property type="match status" value="1"/>
</dbReference>
<keyword id="KW-0066">ATP synthesis</keyword>
<keyword id="KW-1003">Cell membrane</keyword>
<keyword id="KW-0139">CF(1)</keyword>
<keyword id="KW-0375">Hydrogen ion transport</keyword>
<keyword id="KW-0406">Ion transport</keyword>
<keyword id="KW-0472">Membrane</keyword>
<keyword id="KW-0813">Transport</keyword>
<sequence>MKSSLKPVEKYAYSIFEIAKEEKKLDLYKHNLETINSIIEEVPAFFEAVGDPARDRNERKQIVIKNLEGEIDIYLISLIDLLIDVKSVKLLKKIVLKALDFVNEALSVKKVLITTAYELTKNQIDRLLQSLKKKYVCEKIEPIVVVDKSIIGGLSINFESQVLDNSLKTKLFNIVKKVN</sequence>
<gene>
    <name evidence="1" type="primary">atpH</name>
    <name type="ordered locus">UPA3_0140</name>
</gene>
<proteinExistence type="inferred from homology"/>
<reference key="1">
    <citation type="submission" date="2008-02" db="EMBL/GenBank/DDBJ databases">
        <title>Genome sequence of Ureaplasma parvum serovar 3.</title>
        <authorList>
            <person name="Methe B.A."/>
            <person name="Glass J."/>
            <person name="Waites K."/>
            <person name="Shrivastava S."/>
        </authorList>
    </citation>
    <scope>NUCLEOTIDE SEQUENCE [LARGE SCALE GENOMIC DNA]</scope>
    <source>
        <strain>ATCC 27815 / 27 / NCTC 11736</strain>
    </source>
</reference>
<feature type="chain" id="PRO_0000371189" description="ATP synthase subunit delta">
    <location>
        <begin position="1"/>
        <end position="179"/>
    </location>
</feature>
<name>ATPD_UREP2</name>
<organism>
    <name type="scientific">Ureaplasma parvum serovar 3 (strain ATCC 27815 / 27 / NCTC 11736)</name>
    <dbReference type="NCBI Taxonomy" id="505682"/>
    <lineage>
        <taxon>Bacteria</taxon>
        <taxon>Bacillati</taxon>
        <taxon>Mycoplasmatota</taxon>
        <taxon>Mycoplasmoidales</taxon>
        <taxon>Mycoplasmoidaceae</taxon>
        <taxon>Ureaplasma</taxon>
    </lineage>
</organism>
<evidence type="ECO:0000255" key="1">
    <source>
        <dbReference type="HAMAP-Rule" id="MF_01416"/>
    </source>
</evidence>
<accession>B1AIC3</accession>
<comment type="function">
    <text evidence="1">F(1)F(0) ATP synthase produces ATP from ADP in the presence of a proton or sodium gradient. F-type ATPases consist of two structural domains, F(1) containing the extramembraneous catalytic core and F(0) containing the membrane proton channel, linked together by a central stalk and a peripheral stalk. During catalysis, ATP synthesis in the catalytic domain of F(1) is coupled via a rotary mechanism of the central stalk subunits to proton translocation.</text>
</comment>
<comment type="function">
    <text evidence="1">This protein is part of the stalk that links CF(0) to CF(1). It either transmits conformational changes from CF(0) to CF(1) or is implicated in proton conduction.</text>
</comment>
<comment type="subunit">
    <text evidence="1">F-type ATPases have 2 components, F(1) - the catalytic core - and F(0) - the membrane proton channel. F(1) has five subunits: alpha(3), beta(3), gamma(1), delta(1), epsilon(1). F(0) has three main subunits: a(1), b(2) and c(10-14). The alpha and beta chains form an alternating ring which encloses part of the gamma chain. F(1) is attached to F(0) by a central stalk formed by the gamma and epsilon chains, while a peripheral stalk is formed by the delta and b chains.</text>
</comment>
<comment type="subcellular location">
    <subcellularLocation>
        <location evidence="1">Cell membrane</location>
        <topology evidence="1">Peripheral membrane protein</topology>
    </subcellularLocation>
</comment>
<comment type="similarity">
    <text evidence="1">Belongs to the ATPase delta chain family.</text>
</comment>
<protein>
    <recommendedName>
        <fullName evidence="1">ATP synthase subunit delta</fullName>
    </recommendedName>
    <alternativeName>
        <fullName evidence="1">ATP synthase F(1) sector subunit delta</fullName>
    </alternativeName>
    <alternativeName>
        <fullName evidence="1">F-type ATPase subunit delta</fullName>
        <shortName evidence="1">F-ATPase subunit delta</shortName>
    </alternativeName>
</protein>